<comment type="function">
    <text evidence="2 3 4 5 7">Involved in retrograde transport from early and late endosomes to late Golgi by linking the vesicle through the t-SNARE TGL1 to the Golgi, leading to the membrane fusion between late Golgi and endosomal vesicles.</text>
</comment>
<comment type="subunit">
    <text evidence="2 3 5 6 7">Component of the Golgi-associated retrograde protein (GARP) complex, also called VFT (VPS fifty-three) complex, composed of VPS51, VPS52, VPS53 and VPS54. Also interacts with TLG1, YPT6 and ARL1.</text>
</comment>
<comment type="interaction">
    <interactant intactId="EBI-25828">
        <id>P47061</id>
    </interactant>
    <interactant intactId="EBI-2869">
        <id>P38116</id>
        <label>ARL1</label>
    </interactant>
    <organismsDiffer>false</organismsDiffer>
    <experiments>3</experiments>
</comment>
<comment type="interaction">
    <interactant intactId="EBI-25828">
        <id>P47061</id>
    </interactant>
    <interactant intactId="EBI-26352">
        <id>P36116</id>
        <label>VPS51</label>
    </interactant>
    <organismsDiffer>false</organismsDiffer>
    <experiments>4</experiments>
</comment>
<comment type="interaction">
    <interactant intactId="EBI-25828">
        <id>P47061</id>
    </interactant>
    <interactant intactId="EBI-16418">
        <id>P39904</id>
        <label>VPS52</label>
    </interactant>
    <organismsDiffer>false</organismsDiffer>
    <experiments>8</experiments>
</comment>
<comment type="interaction">
    <interactant intactId="EBI-25828">
        <id>P47061</id>
    </interactant>
    <interactant intactId="EBI-36751">
        <id>Q12071</id>
        <label>VPS54</label>
    </interactant>
    <organismsDiffer>false</organismsDiffer>
    <experiments>10</experiments>
</comment>
<comment type="subcellular location">
    <subcellularLocation>
        <location>Golgi apparatus</location>
        <location>trans-Golgi network membrane</location>
        <topology>Peripheral membrane protein</topology>
    </subcellularLocation>
    <subcellularLocation>
        <location>Endosome membrane</location>
        <topology>Peripheral membrane protein</topology>
    </subcellularLocation>
</comment>
<comment type="similarity">
    <text evidence="8">Belongs to the VPS53 family.</text>
</comment>
<keyword id="KW-0002">3D-structure</keyword>
<keyword id="KW-0175">Coiled coil</keyword>
<keyword id="KW-0967">Endosome</keyword>
<keyword id="KW-0333">Golgi apparatus</keyword>
<keyword id="KW-0472">Membrane</keyword>
<keyword id="KW-0653">Protein transport</keyword>
<keyword id="KW-1185">Reference proteome</keyword>
<keyword id="KW-0813">Transport</keyword>
<organism>
    <name type="scientific">Saccharomyces cerevisiae (strain ATCC 204508 / S288c)</name>
    <name type="common">Baker's yeast</name>
    <dbReference type="NCBI Taxonomy" id="559292"/>
    <lineage>
        <taxon>Eukaryota</taxon>
        <taxon>Fungi</taxon>
        <taxon>Dikarya</taxon>
        <taxon>Ascomycota</taxon>
        <taxon>Saccharomycotina</taxon>
        <taxon>Saccharomycetes</taxon>
        <taxon>Saccharomycetales</taxon>
        <taxon>Saccharomycetaceae</taxon>
        <taxon>Saccharomyces</taxon>
    </lineage>
</organism>
<name>VPS53_YEAST</name>
<feature type="chain" id="PRO_0000215193" description="Vacuolar protein sorting-associated protein 53">
    <location>
        <begin position="1"/>
        <end position="822"/>
    </location>
</feature>
<feature type="coiled-coil region" evidence="1">
    <location>
        <begin position="34"/>
        <end position="58"/>
    </location>
</feature>
<feature type="coiled-coil region" evidence="1">
    <location>
        <begin position="460"/>
        <end position="484"/>
    </location>
</feature>
<feature type="helix" evidence="9">
    <location>
        <begin position="567"/>
        <end position="569"/>
    </location>
</feature>
<feature type="helix" evidence="9">
    <location>
        <begin position="571"/>
        <end position="598"/>
    </location>
</feature>
<feature type="strand" evidence="9">
    <location>
        <begin position="605"/>
        <end position="608"/>
    </location>
</feature>
<feature type="helix" evidence="9">
    <location>
        <begin position="615"/>
        <end position="638"/>
    </location>
</feature>
<feature type="helix" evidence="9">
    <location>
        <begin position="639"/>
        <end position="643"/>
    </location>
</feature>
<feature type="helix" evidence="9">
    <location>
        <begin position="653"/>
        <end position="676"/>
    </location>
</feature>
<feature type="helix" evidence="9">
    <location>
        <begin position="683"/>
        <end position="693"/>
    </location>
</feature>
<feature type="helix" evidence="9">
    <location>
        <begin position="700"/>
        <end position="710"/>
    </location>
</feature>
<feature type="helix" evidence="9">
    <location>
        <begin position="716"/>
        <end position="729"/>
    </location>
</feature>
<feature type="helix" evidence="9">
    <location>
        <begin position="746"/>
        <end position="750"/>
    </location>
</feature>
<feature type="helix" evidence="9">
    <location>
        <begin position="752"/>
        <end position="763"/>
    </location>
</feature>
<feature type="helix" evidence="9">
    <location>
        <begin position="768"/>
        <end position="776"/>
    </location>
</feature>
<proteinExistence type="evidence at protein level"/>
<protein>
    <recommendedName>
        <fullName>Vacuolar protein sorting-associated protein 53</fullName>
    </recommendedName>
</protein>
<accession>P47061</accession>
<accession>D6VWF3</accession>
<evidence type="ECO:0000255" key="1"/>
<evidence type="ECO:0000269" key="2">
    <source>
    </source>
</evidence>
<evidence type="ECO:0000269" key="3">
    <source>
    </source>
</evidence>
<evidence type="ECO:0000269" key="4">
    <source>
    </source>
</evidence>
<evidence type="ECO:0000269" key="5">
    <source>
    </source>
</evidence>
<evidence type="ECO:0000269" key="6">
    <source>
    </source>
</evidence>
<evidence type="ECO:0000269" key="7">
    <source>
    </source>
</evidence>
<evidence type="ECO:0000305" key="8"/>
<evidence type="ECO:0007829" key="9">
    <source>
        <dbReference type="PDB" id="3NS4"/>
    </source>
</evidence>
<sequence length="822" mass="95449">MLEGTVDYDPLEDITNILFSKESLNNIDELISITRSYKKQLQEDILKEENELKEHPKNSAEIEASLRKVFQDFKETQDVSASTELTISNLTEGISYLDIAKKNLTHSLTLFQNLKILTDSYIQCNELLSQGSFKKMVSPYKIMCSLAENTFISYKSLDEINYLLSSISRLKGDTLSKIKQNYNALFSGGNISEHDTALTMELREGACELLDCDTSTRAQMIDWCLDKLLFEMKEIFRVDDEAGSLENLSRRYIYFKKILNNFNSKFADYFLKDWEMAVRLTTTFYHITHKDLQTLLKREFKDKNPSIDLFMTALQSTLDFEKYIDVRFSKKIKEPKLSSCFEPYLTLWVSHQNQMMEKKFLSYMSEPKYPSNETESLVLPSSADLFRTYRSVLTQTLELIDNNANDSILTSLANFFSRWLQTYSQKILLPLLLPDNIEVQDKLEAAKYTVLLINTADYCATTIDQLEDKLSEFSGNREKLANSFTKTKNIYDDLLAKGTSFLLNRVIPLDLNFVWREFINNDWSNAAIEDYSRYMVTLKSVLKMPALTDASIKQQQEQPSTLAFILSQFNRDVYKWNFLDKVIDIITTNFVSNTIRLLQPVPPFSLAGSKRKFETRTVVNIGEQLLLDLELLKEIFHTLPESVSNDSDLRENTSYKRVKRHADNNIDQLLKFIKLLMAPLDSADDYYETYSKLTNNNPDSAVWSFVLALKGIPWDLALWKKLWSAYNLETDDTDEGSRPDSNRDLFIFKWDKVLLGQFENNLARMQDPNWSKFVRQDLKISPPVMKRIVSTPQIQQQKEEQKKQSLSVKDFVSHSRFFNRGT</sequence>
<reference key="1">
    <citation type="journal article" date="1996" name="EMBO J.">
        <title>Complete nucleotide sequence of Saccharomyces cerevisiae chromosome X.</title>
        <authorList>
            <person name="Galibert F."/>
            <person name="Alexandraki D."/>
            <person name="Baur A."/>
            <person name="Boles E."/>
            <person name="Chalwatzis N."/>
            <person name="Chuat J.-C."/>
            <person name="Coster F."/>
            <person name="Cziepluch C."/>
            <person name="de Haan M."/>
            <person name="Domdey H."/>
            <person name="Durand P."/>
            <person name="Entian K.-D."/>
            <person name="Gatius M."/>
            <person name="Goffeau A."/>
            <person name="Grivell L.A."/>
            <person name="Hennemann A."/>
            <person name="Herbert C.J."/>
            <person name="Heumann K."/>
            <person name="Hilger F."/>
            <person name="Hollenberg C.P."/>
            <person name="Huang M.-E."/>
            <person name="Jacq C."/>
            <person name="Jauniaux J.-C."/>
            <person name="Katsoulou C."/>
            <person name="Kirchrath L."/>
            <person name="Kleine K."/>
            <person name="Kordes E."/>
            <person name="Koetter P."/>
            <person name="Liebl S."/>
            <person name="Louis E.J."/>
            <person name="Manus V."/>
            <person name="Mewes H.-W."/>
            <person name="Miosga T."/>
            <person name="Obermaier B."/>
            <person name="Perea J."/>
            <person name="Pohl T.M."/>
            <person name="Portetelle D."/>
            <person name="Pujol A."/>
            <person name="Purnelle B."/>
            <person name="Ramezani Rad M."/>
            <person name="Rasmussen S.W."/>
            <person name="Rose M."/>
            <person name="Rossau R."/>
            <person name="Schaaff-Gerstenschlaeger I."/>
            <person name="Smits P.H.M."/>
            <person name="Scarcez T."/>
            <person name="Soriano N."/>
            <person name="To Van D."/>
            <person name="Tzermia M."/>
            <person name="Van Broekhoven A."/>
            <person name="Vandenbol M."/>
            <person name="Wedler H."/>
            <person name="von Wettstein D."/>
            <person name="Wambutt R."/>
            <person name="Zagulski M."/>
            <person name="Zollner A."/>
            <person name="Karpfinger-Hartl L."/>
        </authorList>
    </citation>
    <scope>NUCLEOTIDE SEQUENCE [LARGE SCALE GENOMIC DNA]</scope>
    <source>
        <strain>ATCC 204508 / S288c</strain>
    </source>
</reference>
<reference key="2">
    <citation type="journal article" date="2014" name="G3 (Bethesda)">
        <title>The reference genome sequence of Saccharomyces cerevisiae: Then and now.</title>
        <authorList>
            <person name="Engel S.R."/>
            <person name="Dietrich F.S."/>
            <person name="Fisk D.G."/>
            <person name="Binkley G."/>
            <person name="Balakrishnan R."/>
            <person name="Costanzo M.C."/>
            <person name="Dwight S.S."/>
            <person name="Hitz B.C."/>
            <person name="Karra K."/>
            <person name="Nash R.S."/>
            <person name="Weng S."/>
            <person name="Wong E.D."/>
            <person name="Lloyd P."/>
            <person name="Skrzypek M.S."/>
            <person name="Miyasato S.R."/>
            <person name="Simison M."/>
            <person name="Cherry J.M."/>
        </authorList>
    </citation>
    <scope>GENOME REANNOTATION</scope>
    <source>
        <strain>ATCC 204508 / S288c</strain>
    </source>
</reference>
<reference key="3">
    <citation type="journal article" date="2000" name="Mol. Biol. Cell">
        <title>Vps52p, Vps53p, and Vps54p form a novel multisubunit complex required for protein sorting at the yeast late Golgi.</title>
        <authorList>
            <person name="Conibear E."/>
            <person name="Stevens T.H."/>
        </authorList>
    </citation>
    <scope>FUNCTION</scope>
    <scope>INTERACTION WITH VPS52 AND VPS54</scope>
</reference>
<reference key="4">
    <citation type="journal article" date="2001" name="EMBO J.">
        <title>An effector of Ypt6p binds the SNARE Tlg1p and mediates selective fusion of vesicles with late Golgi membranes.</title>
        <authorList>
            <person name="Siniossoglou S."/>
            <person name="Pelham H.R.B."/>
        </authorList>
    </citation>
    <scope>FUNCTION</scope>
    <scope>INTERACTION WITH TLG1 AND YPT6</scope>
</reference>
<reference key="5">
    <citation type="journal article" date="2002" name="J. Biol. Chem.">
        <title>Vps51p links the VFT complex to the SNARE Tlg1p.</title>
        <authorList>
            <person name="Siniossoglou S."/>
            <person name="Pelham H.R.B."/>
        </authorList>
    </citation>
    <scope>FUNCTION</scope>
    <scope>SUBCELLULAR LOCATION</scope>
</reference>
<reference key="6">
    <citation type="journal article" date="2003" name="Curr. Biol.">
        <title>The ARF-like GTPases Arl1p and Arl3p act in a pathway that interacts with vesicle-tethering factors at the Golgi apparatus.</title>
        <authorList>
            <person name="Panic B."/>
            <person name="Whyte J.R.C."/>
            <person name="Munro S."/>
        </authorList>
    </citation>
    <scope>INTERACTION WITH ARL1</scope>
</reference>
<reference key="7">
    <citation type="journal article" date="2003" name="J. Biol. Chem.">
        <title>Vps51 is part of the yeast Vps fifty-three tethering complex essential for retrograde traffic from the early endosome and Cvt vesicle completion.</title>
        <authorList>
            <person name="Reggiori F."/>
            <person name="Wang C.-W."/>
            <person name="Stromhaug P.E."/>
            <person name="Shintani T."/>
            <person name="Klionsky D.J."/>
        </authorList>
    </citation>
    <scope>FUNCTION</scope>
    <scope>INTERACTION WITH VPS51; VPS52 AND VPS54</scope>
</reference>
<reference key="8">
    <citation type="journal article" date="2003" name="Mol. Biol. Cell">
        <title>Vps51p mediates the association of the GARP (Vps52/53/54) complex with the late Golgi t-SNARE Tlg1p.</title>
        <authorList>
            <person name="Conibear E."/>
            <person name="Cleck J.N."/>
            <person name="Stevens T.H."/>
        </authorList>
    </citation>
    <scope>FUNCTION</scope>
    <scope>INTERACTION WITH VPS51; VPS52; VPS54 AND TLG1</scope>
</reference>
<reference key="9">
    <citation type="journal article" date="2003" name="Nature">
        <title>Global analysis of protein localization in budding yeast.</title>
        <authorList>
            <person name="Huh W.-K."/>
            <person name="Falvo J.V."/>
            <person name="Gerke L.C."/>
            <person name="Carroll A.S."/>
            <person name="Howson R.W."/>
            <person name="Weissman J.S."/>
            <person name="O'Shea E.K."/>
        </authorList>
    </citation>
    <scope>SUBCELLULAR LOCATION [LARGE SCALE ANALYSIS]</scope>
</reference>
<reference key="10">
    <citation type="journal article" date="2007" name="Proc. Natl. Acad. Sci. U.S.A.">
        <title>Analysis of phosphorylation sites on proteins from Saccharomyces cerevisiae by electron transfer dissociation (ETD) mass spectrometry.</title>
        <authorList>
            <person name="Chi A."/>
            <person name="Huttenhower C."/>
            <person name="Geer L.Y."/>
            <person name="Coon J.J."/>
            <person name="Syka J.E.P."/>
            <person name="Bai D.L."/>
            <person name="Shabanowitz J."/>
            <person name="Burke D.J."/>
            <person name="Troyanskaya O.G."/>
            <person name="Hunt D.F."/>
        </authorList>
    </citation>
    <scope>IDENTIFICATION BY MASS SPECTROMETRY [LARGE SCALE ANALYSIS]</scope>
</reference>
<reference key="11">
    <citation type="journal article" date="2008" name="Mol. Cell. Proteomics">
        <title>A multidimensional chromatography technology for in-depth phosphoproteome analysis.</title>
        <authorList>
            <person name="Albuquerque C.P."/>
            <person name="Smolka M.B."/>
            <person name="Payne S.H."/>
            <person name="Bafna V."/>
            <person name="Eng J."/>
            <person name="Zhou H."/>
        </authorList>
    </citation>
    <scope>IDENTIFICATION BY MASS SPECTROMETRY [LARGE SCALE ANALYSIS]</scope>
</reference>
<dbReference type="EMBL" id="Z49304">
    <property type="protein sequence ID" value="CAA89320.1"/>
    <property type="molecule type" value="Genomic_DNA"/>
</dbReference>
<dbReference type="EMBL" id="BK006943">
    <property type="protein sequence ID" value="DAA08769.1"/>
    <property type="molecule type" value="Genomic_DNA"/>
</dbReference>
<dbReference type="PIR" id="S56801">
    <property type="entry name" value="S56801"/>
</dbReference>
<dbReference type="RefSeq" id="NP_012505.1">
    <property type="nucleotide sequence ID" value="NM_001181463.1"/>
</dbReference>
<dbReference type="PDB" id="3NS4">
    <property type="method" value="X-ray"/>
    <property type="resolution" value="2.90 A"/>
    <property type="chains" value="A=554-822"/>
</dbReference>
<dbReference type="PDBsum" id="3NS4"/>
<dbReference type="SMR" id="P47061"/>
<dbReference type="BioGRID" id="33730">
    <property type="interactions" value="719"/>
</dbReference>
<dbReference type="ComplexPortal" id="CPX-1718">
    <property type="entry name" value="GARP tethering complex"/>
</dbReference>
<dbReference type="DIP" id="DIP-5902N"/>
<dbReference type="FunCoup" id="P47061">
    <property type="interactions" value="905"/>
</dbReference>
<dbReference type="IntAct" id="P47061">
    <property type="interactions" value="8"/>
</dbReference>
<dbReference type="MINT" id="P47061"/>
<dbReference type="STRING" id="4932.YJL029C"/>
<dbReference type="iPTMnet" id="P47061"/>
<dbReference type="PaxDb" id="4932-YJL029C"/>
<dbReference type="PeptideAtlas" id="P47061"/>
<dbReference type="EnsemblFungi" id="YJL029C_mRNA">
    <property type="protein sequence ID" value="YJL029C"/>
    <property type="gene ID" value="YJL029C"/>
</dbReference>
<dbReference type="GeneID" id="853423"/>
<dbReference type="KEGG" id="sce:YJL029C"/>
<dbReference type="AGR" id="SGD:S000003566"/>
<dbReference type="SGD" id="S000003566">
    <property type="gene designation" value="VPS53"/>
</dbReference>
<dbReference type="VEuPathDB" id="FungiDB:YJL029C"/>
<dbReference type="eggNOG" id="KOG2180">
    <property type="taxonomic scope" value="Eukaryota"/>
</dbReference>
<dbReference type="GeneTree" id="ENSGT00390000015165"/>
<dbReference type="HOGENOM" id="CLU_358642_0_0_1"/>
<dbReference type="InParanoid" id="P47061"/>
<dbReference type="OMA" id="MINTADY"/>
<dbReference type="OrthoDB" id="10261632at2759"/>
<dbReference type="BioCyc" id="YEAST:G3O-31498-MONOMER"/>
<dbReference type="BioGRID-ORCS" id="853423">
    <property type="hits" value="7 hits in 10 CRISPR screens"/>
</dbReference>
<dbReference type="EvolutionaryTrace" id="P47061"/>
<dbReference type="PRO" id="PR:P47061"/>
<dbReference type="Proteomes" id="UP000002311">
    <property type="component" value="Chromosome X"/>
</dbReference>
<dbReference type="RNAct" id="P47061">
    <property type="molecule type" value="protein"/>
</dbReference>
<dbReference type="GO" id="GO:0005737">
    <property type="term" value="C:cytoplasm"/>
    <property type="evidence" value="ECO:0007005"/>
    <property type="project" value="SGD"/>
</dbReference>
<dbReference type="GO" id="GO:0005829">
    <property type="term" value="C:cytosol"/>
    <property type="evidence" value="ECO:0007005"/>
    <property type="project" value="SGD"/>
</dbReference>
<dbReference type="GO" id="GO:0010008">
    <property type="term" value="C:endosome membrane"/>
    <property type="evidence" value="ECO:0007669"/>
    <property type="project" value="UniProtKB-SubCell"/>
</dbReference>
<dbReference type="GO" id="GO:0000938">
    <property type="term" value="C:GARP complex"/>
    <property type="evidence" value="ECO:0000353"/>
    <property type="project" value="SGD"/>
</dbReference>
<dbReference type="GO" id="GO:0005794">
    <property type="term" value="C:Golgi apparatus"/>
    <property type="evidence" value="ECO:0000314"/>
    <property type="project" value="SGD"/>
</dbReference>
<dbReference type="GO" id="GO:0006896">
    <property type="term" value="P:Golgi to vacuole transport"/>
    <property type="evidence" value="ECO:0000315"/>
    <property type="project" value="SGD"/>
</dbReference>
<dbReference type="GO" id="GO:0090156">
    <property type="term" value="P:intracellular sphingolipid homeostasis"/>
    <property type="evidence" value="ECO:0000315"/>
    <property type="project" value="SGD"/>
</dbReference>
<dbReference type="GO" id="GO:0006623">
    <property type="term" value="P:protein targeting to vacuole"/>
    <property type="evidence" value="ECO:0000314"/>
    <property type="project" value="ComplexPortal"/>
</dbReference>
<dbReference type="GO" id="GO:0042147">
    <property type="term" value="P:retrograde transport, endosome to Golgi"/>
    <property type="evidence" value="ECO:0000314"/>
    <property type="project" value="SGD"/>
</dbReference>
<dbReference type="Gene3D" id="1.10.357.110">
    <property type="entry name" value="Vacuolar protein sorting-associated protein 53, C-terminus"/>
    <property type="match status" value="1"/>
</dbReference>
<dbReference type="InterPro" id="IPR039766">
    <property type="entry name" value="Vps53"/>
</dbReference>
<dbReference type="InterPro" id="IPR031745">
    <property type="entry name" value="Vps53_C"/>
</dbReference>
<dbReference type="InterPro" id="IPR038260">
    <property type="entry name" value="Vps53_C_sf"/>
</dbReference>
<dbReference type="InterPro" id="IPR007234">
    <property type="entry name" value="Vps53_N"/>
</dbReference>
<dbReference type="PANTHER" id="PTHR12820:SF0">
    <property type="entry name" value="VACUOLAR PROTEIN SORTING-ASSOCIATED PROTEIN 53 HOMOLOG"/>
    <property type="match status" value="1"/>
</dbReference>
<dbReference type="PANTHER" id="PTHR12820">
    <property type="entry name" value="VACUOLAR SORTING PROTEIN 53"/>
    <property type="match status" value="1"/>
</dbReference>
<dbReference type="Pfam" id="PF16854">
    <property type="entry name" value="VPS53_C"/>
    <property type="match status" value="1"/>
</dbReference>
<dbReference type="Pfam" id="PF04100">
    <property type="entry name" value="Vps53_N"/>
    <property type="match status" value="1"/>
</dbReference>
<gene>
    <name type="primary">VPS53</name>
    <name type="ordered locus">YJL029C</name>
    <name type="ORF">J1258</name>
</gene>